<organism>
    <name type="scientific">Mesembryanthemum crystallinum</name>
    <name type="common">Common ice plant</name>
    <name type="synonym">Cryophytum crystallinum</name>
    <dbReference type="NCBI Taxonomy" id="3544"/>
    <lineage>
        <taxon>Eukaryota</taxon>
        <taxon>Viridiplantae</taxon>
        <taxon>Streptophyta</taxon>
        <taxon>Embryophyta</taxon>
        <taxon>Tracheophyta</taxon>
        <taxon>Spermatophyta</taxon>
        <taxon>Magnoliopsida</taxon>
        <taxon>eudicotyledons</taxon>
        <taxon>Gunneridae</taxon>
        <taxon>Pentapetalae</taxon>
        <taxon>Caryophyllales</taxon>
        <taxon>Aizoaceae</taxon>
        <taxon>Mesembryanthemum</taxon>
        <taxon>Mesembryanthemum subgen. Cryophytum</taxon>
    </lineage>
</organism>
<accession>O65361</accession>
<protein>
    <recommendedName>
        <fullName>Delta-1-pyrroline-5-carboxylate synthase</fullName>
        <shortName>P5CS</shortName>
    </recommendedName>
    <domain>
        <recommendedName>
            <fullName>Glutamate 5-kinase</fullName>
            <shortName>GK</shortName>
            <ecNumber>2.7.2.11</ecNumber>
        </recommendedName>
        <alternativeName>
            <fullName>Gamma-glutamyl kinase</fullName>
        </alternativeName>
    </domain>
    <domain>
        <recommendedName>
            <fullName>Gamma-glutamyl phosphate reductase</fullName>
            <shortName>GPR</shortName>
            <ecNumber>1.2.1.41</ecNumber>
        </recommendedName>
        <alternativeName>
            <fullName>Glutamate-5-semialdehyde dehydrogenase</fullName>
        </alternativeName>
        <alternativeName>
            <fullName>Glutamyl-gamma-semialdehyde dehydrogenase</fullName>
        </alternativeName>
    </domain>
</protein>
<evidence type="ECO:0000250" key="1"/>
<evidence type="ECO:0000305" key="2"/>
<keyword id="KW-0028">Amino-acid biosynthesis</keyword>
<keyword id="KW-0067">ATP-binding</keyword>
<keyword id="KW-0418">Kinase</keyword>
<keyword id="KW-0511">Multifunctional enzyme</keyword>
<keyword id="KW-0521">NADP</keyword>
<keyword id="KW-0547">Nucleotide-binding</keyword>
<keyword id="KW-0560">Oxidoreductase</keyword>
<keyword id="KW-0641">Proline biosynthesis</keyword>
<keyword id="KW-0808">Transferase</keyword>
<dbReference type="EC" id="2.7.2.11"/>
<dbReference type="EC" id="1.2.1.41"/>
<dbReference type="EMBL" id="AF067967">
    <property type="protein sequence ID" value="AAC18862.1"/>
    <property type="molecule type" value="mRNA"/>
</dbReference>
<dbReference type="PIR" id="T12258">
    <property type="entry name" value="T12258"/>
</dbReference>
<dbReference type="SMR" id="O65361"/>
<dbReference type="UniPathway" id="UPA00098">
    <property type="reaction ID" value="UER00359"/>
</dbReference>
<dbReference type="UniPathway" id="UPA00098">
    <property type="reaction ID" value="UER00360"/>
</dbReference>
<dbReference type="GO" id="GO:0005737">
    <property type="term" value="C:cytoplasm"/>
    <property type="evidence" value="ECO:0007669"/>
    <property type="project" value="InterPro"/>
</dbReference>
<dbReference type="GO" id="GO:0005524">
    <property type="term" value="F:ATP binding"/>
    <property type="evidence" value="ECO:0007669"/>
    <property type="project" value="UniProtKB-KW"/>
</dbReference>
<dbReference type="GO" id="GO:0004349">
    <property type="term" value="F:glutamate 5-kinase activity"/>
    <property type="evidence" value="ECO:0007669"/>
    <property type="project" value="UniProtKB-EC"/>
</dbReference>
<dbReference type="GO" id="GO:0004350">
    <property type="term" value="F:glutamate-5-semialdehyde dehydrogenase activity"/>
    <property type="evidence" value="ECO:0007669"/>
    <property type="project" value="UniProtKB-EC"/>
</dbReference>
<dbReference type="GO" id="GO:0055129">
    <property type="term" value="P:L-proline biosynthetic process"/>
    <property type="evidence" value="ECO:0007669"/>
    <property type="project" value="UniProtKB-UniPathway"/>
</dbReference>
<dbReference type="CDD" id="cd07079">
    <property type="entry name" value="ALDH_F18-19_ProA-GPR"/>
    <property type="match status" value="1"/>
</dbReference>
<dbReference type="FunFam" id="3.40.1160.10:FF:000013">
    <property type="entry name" value="Delta-1-pyrroline-5-carboxylate synthase"/>
    <property type="match status" value="1"/>
</dbReference>
<dbReference type="FunFam" id="3.40.309.10:FF:000015">
    <property type="entry name" value="Delta-1-pyrroline-5-carboxylate synthase"/>
    <property type="match status" value="1"/>
</dbReference>
<dbReference type="Gene3D" id="3.40.1160.10">
    <property type="entry name" value="Acetylglutamate kinase-like"/>
    <property type="match status" value="1"/>
</dbReference>
<dbReference type="Gene3D" id="3.40.605.10">
    <property type="entry name" value="Aldehyde Dehydrogenase, Chain A, domain 1"/>
    <property type="match status" value="1"/>
</dbReference>
<dbReference type="Gene3D" id="3.40.309.10">
    <property type="entry name" value="Aldehyde Dehydrogenase, Chain A, domain 2"/>
    <property type="match status" value="1"/>
</dbReference>
<dbReference type="HAMAP" id="MF_00412">
    <property type="entry name" value="ProA"/>
    <property type="match status" value="1"/>
</dbReference>
<dbReference type="HAMAP" id="MF_00456">
    <property type="entry name" value="ProB"/>
    <property type="match status" value="1"/>
</dbReference>
<dbReference type="InterPro" id="IPR036393">
    <property type="entry name" value="AceGlu_kinase-like_sf"/>
</dbReference>
<dbReference type="InterPro" id="IPR016161">
    <property type="entry name" value="Ald_DH/histidinol_DH"/>
</dbReference>
<dbReference type="InterPro" id="IPR016163">
    <property type="entry name" value="Ald_DH_C"/>
</dbReference>
<dbReference type="InterPro" id="IPR016162">
    <property type="entry name" value="Ald_DH_N"/>
</dbReference>
<dbReference type="InterPro" id="IPR015590">
    <property type="entry name" value="Aldehyde_DH_dom"/>
</dbReference>
<dbReference type="InterPro" id="IPR001048">
    <property type="entry name" value="Asp/Glu/Uridylate_kinase"/>
</dbReference>
<dbReference type="InterPro" id="IPR020593">
    <property type="entry name" value="G-glutamylP_reductase_CS"/>
</dbReference>
<dbReference type="InterPro" id="IPR001057">
    <property type="entry name" value="Glu/AcGlu_kinase"/>
</dbReference>
<dbReference type="InterPro" id="IPR005715">
    <property type="entry name" value="Glu_5kinase/COase_Synthase"/>
</dbReference>
<dbReference type="InterPro" id="IPR019797">
    <property type="entry name" value="Glutamate_5-kinase_CS"/>
</dbReference>
<dbReference type="InterPro" id="IPR000965">
    <property type="entry name" value="GPR_dom"/>
</dbReference>
<dbReference type="InterPro" id="IPR005766">
    <property type="entry name" value="P5_carboxy_syn"/>
</dbReference>
<dbReference type="NCBIfam" id="TIGR01092">
    <property type="entry name" value="P5CS"/>
    <property type="match status" value="1"/>
</dbReference>
<dbReference type="NCBIfam" id="NF001221">
    <property type="entry name" value="PRK00197.1"/>
    <property type="match status" value="1"/>
</dbReference>
<dbReference type="NCBIfam" id="TIGR00407">
    <property type="entry name" value="proA"/>
    <property type="match status" value="1"/>
</dbReference>
<dbReference type="NCBIfam" id="TIGR01027">
    <property type="entry name" value="proB"/>
    <property type="match status" value="1"/>
</dbReference>
<dbReference type="PANTHER" id="PTHR11063:SF8">
    <property type="entry name" value="DELTA-1-PYRROLINE-5-CARBOXYLATE SYNTHASE"/>
    <property type="match status" value="1"/>
</dbReference>
<dbReference type="PANTHER" id="PTHR11063">
    <property type="entry name" value="GLUTAMATE SEMIALDEHYDE DEHYDROGENASE"/>
    <property type="match status" value="1"/>
</dbReference>
<dbReference type="Pfam" id="PF00696">
    <property type="entry name" value="AA_kinase"/>
    <property type="match status" value="1"/>
</dbReference>
<dbReference type="Pfam" id="PF00171">
    <property type="entry name" value="Aldedh"/>
    <property type="match status" value="1"/>
</dbReference>
<dbReference type="PIRSF" id="PIRSF036429">
    <property type="entry name" value="P5C_syn"/>
    <property type="match status" value="1"/>
</dbReference>
<dbReference type="PRINTS" id="PR00474">
    <property type="entry name" value="GLU5KINASE"/>
</dbReference>
<dbReference type="SUPFAM" id="SSF53720">
    <property type="entry name" value="ALDH-like"/>
    <property type="match status" value="1"/>
</dbReference>
<dbReference type="SUPFAM" id="SSF53633">
    <property type="entry name" value="Carbamate kinase-like"/>
    <property type="match status" value="1"/>
</dbReference>
<dbReference type="PROSITE" id="PS00902">
    <property type="entry name" value="GLUTAMATE_5_KINASE"/>
    <property type="match status" value="1"/>
</dbReference>
<dbReference type="PROSITE" id="PS01223">
    <property type="entry name" value="PROA"/>
    <property type="match status" value="1"/>
</dbReference>
<sequence>MDATRAFVKDVKRVVVKVGTAVVTRSDGRLALGRLGSLCEQLKELNSDGYEVILVTSGAVSAGRQRLRFRKLVNSSFADLQKPQVELDGKACAAVGQNGLMALYDTLFSQLDLTAAQLLVTDNDFRDPSFRTQLTETVYQLLDLKVVPVLNENDAVSTRKAPYEDSSGIFWDNDSLAALLALELKADLLILLSDVDGLYNGPPSDPRSKLISTYVKEKHQGEITFGDKSRLGRGGMTAKVKAAVYAAYAGIPVIIASGKATDNIIKVIDGQCVGTLFHKDAHLWVQVKETGVRDMAVAARESSRRLQAVSSEERKKILLDIADALEANEEKILAENEADVAAAQYAGYDRSLVARLAMNPDKISSLAKSIRVLADMEEPIGRILKRTEIADGLILEKTSCPLGVLLIVFESRPDALVQIASLAIRSGNGLLLKGGKEAKRSNAILHKVITSAIPDKVGEKLIGLVTSRDEIPDLLKLDDVIDLVIPRGSNKLVSQIKESTRIPVLGHADGICHVYVDKSANMDMAKRIVLDAKTDYPAACNAMETLLVHKDLAENGGLNDLIVDLRTEGVTMFGGPRIDALQEFNIQATQTFNREYSSPACTVEIVDDVYAAIEHINHHGSAHTDCIIAEDHKVAETFLQLVDSAAVLHNASTRFCDGFRFGLGAEVGISTSRIHARGPVGVEGLLTTRWVLKGSGQVVHGDKGVVYTHKDLPLVAQNS</sequence>
<comment type="function">
    <text>P5CS plays a key role in proline biosynthesis, leading to osmoregulation in plants.</text>
</comment>
<comment type="catalytic activity">
    <reaction>
        <text>L-glutamate + ATP = L-glutamyl 5-phosphate + ADP</text>
        <dbReference type="Rhea" id="RHEA:14877"/>
        <dbReference type="ChEBI" id="CHEBI:29985"/>
        <dbReference type="ChEBI" id="CHEBI:30616"/>
        <dbReference type="ChEBI" id="CHEBI:58274"/>
        <dbReference type="ChEBI" id="CHEBI:456216"/>
        <dbReference type="EC" id="2.7.2.11"/>
    </reaction>
</comment>
<comment type="catalytic activity">
    <reaction>
        <text>L-glutamate 5-semialdehyde + phosphate + NADP(+) = L-glutamyl 5-phosphate + NADPH + H(+)</text>
        <dbReference type="Rhea" id="RHEA:19541"/>
        <dbReference type="ChEBI" id="CHEBI:15378"/>
        <dbReference type="ChEBI" id="CHEBI:43474"/>
        <dbReference type="ChEBI" id="CHEBI:57783"/>
        <dbReference type="ChEBI" id="CHEBI:58066"/>
        <dbReference type="ChEBI" id="CHEBI:58274"/>
        <dbReference type="ChEBI" id="CHEBI:58349"/>
        <dbReference type="EC" id="1.2.1.41"/>
    </reaction>
</comment>
<comment type="activity regulation">
    <text>Feedback regulated by proline.</text>
</comment>
<comment type="pathway">
    <text>Amino-acid biosynthesis; L-proline biosynthesis; L-glutamate 5-semialdehyde from L-glutamate: step 1/2.</text>
</comment>
<comment type="pathway">
    <text>Amino-acid biosynthesis; L-proline biosynthesis; L-glutamate 5-semialdehyde from L-glutamate: step 2/2.</text>
</comment>
<comment type="tissue specificity">
    <text>Expressed at high levels in leaves and is inducible in roots subjected to salt stress.</text>
</comment>
<comment type="similarity">
    <text evidence="2">In the N-terminal section; belongs to the glutamate 5-kinase family.</text>
</comment>
<comment type="similarity">
    <text evidence="2">In the C-terminal section; belongs to the gamma-glutamyl phosphate reductase family.</text>
</comment>
<proteinExistence type="evidence at transcript level"/>
<reference key="1">
    <citation type="submission" date="1998-05" db="EMBL/GenBank/DDBJ databases">
        <title>Mesembryanthemum crystallinum pyrroline-5-carboxylate synthetase mRNA.</title>
        <authorList>
            <person name="Michalowski C.B."/>
            <person name="Quigley-Landreau F."/>
            <person name="Bohnert H.J."/>
        </authorList>
    </citation>
    <scope>NUCLEOTIDE SEQUENCE [MRNA]</scope>
</reference>
<name>P5CS_MESCR</name>
<feature type="chain" id="PRO_0000109776" description="Delta-1-pyrroline-5-carboxylate synthase">
    <location>
        <begin position="1"/>
        <end position="719"/>
    </location>
</feature>
<feature type="region of interest" description="Glutamate 5-kinase">
    <location>
        <begin position="1"/>
        <end position="293"/>
    </location>
</feature>
<feature type="region of interest" description="Gamma-glutamyl phosphate reductase">
    <location>
        <begin position="294"/>
        <end position="719"/>
    </location>
</feature>
<feature type="binding site" evidence="1">
    <location>
        <position position="57"/>
    </location>
    <ligand>
        <name>substrate</name>
    </ligand>
</feature>
<feature type="binding site" evidence="1">
    <location>
        <position position="154"/>
    </location>
    <ligand>
        <name>substrate</name>
    </ligand>
</feature>
<feature type="binding site" evidence="1">
    <location>
        <position position="173"/>
    </location>
    <ligand>
        <name>substrate</name>
    </ligand>
</feature>
<feature type="binding site" evidence="1">
    <location>
        <begin position="193"/>
        <end position="194"/>
    </location>
    <ligand>
        <name>ATP</name>
        <dbReference type="ChEBI" id="CHEBI:30616"/>
    </ligand>
</feature>
<feature type="binding site" evidence="1">
    <location>
        <begin position="233"/>
        <end position="239"/>
    </location>
    <ligand>
        <name>ATP</name>
        <dbReference type="ChEBI" id="CHEBI:30616"/>
    </ligand>
</feature>
<gene>
    <name type="primary">P5CS</name>
</gene>